<dbReference type="EC" id="6.1.1.11" evidence="1"/>
<dbReference type="EMBL" id="AE009442">
    <property type="protein sequence ID" value="AAO29167.1"/>
    <property type="molecule type" value="Genomic_DNA"/>
</dbReference>
<dbReference type="RefSeq" id="WP_004088264.1">
    <property type="nucleotide sequence ID" value="NC_004556.1"/>
</dbReference>
<dbReference type="SMR" id="Q87BX8"/>
<dbReference type="GeneID" id="93905132"/>
<dbReference type="KEGG" id="xft:PD_1318"/>
<dbReference type="HOGENOM" id="CLU_023797_1_1_6"/>
<dbReference type="UniPathway" id="UPA00906">
    <property type="reaction ID" value="UER00895"/>
</dbReference>
<dbReference type="Proteomes" id="UP000002516">
    <property type="component" value="Chromosome"/>
</dbReference>
<dbReference type="GO" id="GO:0005737">
    <property type="term" value="C:cytoplasm"/>
    <property type="evidence" value="ECO:0007669"/>
    <property type="project" value="UniProtKB-SubCell"/>
</dbReference>
<dbReference type="GO" id="GO:0005524">
    <property type="term" value="F:ATP binding"/>
    <property type="evidence" value="ECO:0007669"/>
    <property type="project" value="UniProtKB-UniRule"/>
</dbReference>
<dbReference type="GO" id="GO:0004828">
    <property type="term" value="F:serine-tRNA ligase activity"/>
    <property type="evidence" value="ECO:0007669"/>
    <property type="project" value="UniProtKB-UniRule"/>
</dbReference>
<dbReference type="GO" id="GO:0016260">
    <property type="term" value="P:selenocysteine biosynthetic process"/>
    <property type="evidence" value="ECO:0007669"/>
    <property type="project" value="UniProtKB-UniRule"/>
</dbReference>
<dbReference type="GO" id="GO:0006434">
    <property type="term" value="P:seryl-tRNA aminoacylation"/>
    <property type="evidence" value="ECO:0007669"/>
    <property type="project" value="UniProtKB-UniRule"/>
</dbReference>
<dbReference type="CDD" id="cd00770">
    <property type="entry name" value="SerRS_core"/>
    <property type="match status" value="1"/>
</dbReference>
<dbReference type="Gene3D" id="3.30.930.10">
    <property type="entry name" value="Bira Bifunctional Protein, Domain 2"/>
    <property type="match status" value="1"/>
</dbReference>
<dbReference type="Gene3D" id="1.10.287.40">
    <property type="entry name" value="Serine-tRNA synthetase, tRNA binding domain"/>
    <property type="match status" value="1"/>
</dbReference>
<dbReference type="HAMAP" id="MF_00176">
    <property type="entry name" value="Ser_tRNA_synth_type1"/>
    <property type="match status" value="1"/>
</dbReference>
<dbReference type="InterPro" id="IPR002314">
    <property type="entry name" value="aa-tRNA-synt_IIb"/>
</dbReference>
<dbReference type="InterPro" id="IPR006195">
    <property type="entry name" value="aa-tRNA-synth_II"/>
</dbReference>
<dbReference type="InterPro" id="IPR045864">
    <property type="entry name" value="aa-tRNA-synth_II/BPL/LPL"/>
</dbReference>
<dbReference type="InterPro" id="IPR002317">
    <property type="entry name" value="Ser-tRNA-ligase_type_1"/>
</dbReference>
<dbReference type="InterPro" id="IPR015866">
    <property type="entry name" value="Ser-tRNA-synth_1_N"/>
</dbReference>
<dbReference type="InterPro" id="IPR042103">
    <property type="entry name" value="SerRS_1_N_sf"/>
</dbReference>
<dbReference type="InterPro" id="IPR033729">
    <property type="entry name" value="SerRS_core"/>
</dbReference>
<dbReference type="InterPro" id="IPR010978">
    <property type="entry name" value="tRNA-bd_arm"/>
</dbReference>
<dbReference type="NCBIfam" id="TIGR00414">
    <property type="entry name" value="serS"/>
    <property type="match status" value="1"/>
</dbReference>
<dbReference type="PANTHER" id="PTHR43697:SF1">
    <property type="entry name" value="SERINE--TRNA LIGASE"/>
    <property type="match status" value="1"/>
</dbReference>
<dbReference type="PANTHER" id="PTHR43697">
    <property type="entry name" value="SERYL-TRNA SYNTHETASE"/>
    <property type="match status" value="1"/>
</dbReference>
<dbReference type="Pfam" id="PF02403">
    <property type="entry name" value="Seryl_tRNA_N"/>
    <property type="match status" value="1"/>
</dbReference>
<dbReference type="Pfam" id="PF00587">
    <property type="entry name" value="tRNA-synt_2b"/>
    <property type="match status" value="1"/>
</dbReference>
<dbReference type="PIRSF" id="PIRSF001529">
    <property type="entry name" value="Ser-tRNA-synth_IIa"/>
    <property type="match status" value="1"/>
</dbReference>
<dbReference type="PRINTS" id="PR00981">
    <property type="entry name" value="TRNASYNTHSER"/>
</dbReference>
<dbReference type="SUPFAM" id="SSF55681">
    <property type="entry name" value="Class II aaRS and biotin synthetases"/>
    <property type="match status" value="1"/>
</dbReference>
<dbReference type="SUPFAM" id="SSF46589">
    <property type="entry name" value="tRNA-binding arm"/>
    <property type="match status" value="1"/>
</dbReference>
<dbReference type="PROSITE" id="PS50862">
    <property type="entry name" value="AA_TRNA_LIGASE_II"/>
    <property type="match status" value="1"/>
</dbReference>
<comment type="function">
    <text evidence="1">Catalyzes the attachment of serine to tRNA(Ser). Is also able to aminoacylate tRNA(Sec) with serine, to form the misacylated tRNA L-seryl-tRNA(Sec), which will be further converted into selenocysteinyl-tRNA(Sec).</text>
</comment>
<comment type="catalytic activity">
    <reaction evidence="1">
        <text>tRNA(Ser) + L-serine + ATP = L-seryl-tRNA(Ser) + AMP + diphosphate + H(+)</text>
        <dbReference type="Rhea" id="RHEA:12292"/>
        <dbReference type="Rhea" id="RHEA-COMP:9669"/>
        <dbReference type="Rhea" id="RHEA-COMP:9703"/>
        <dbReference type="ChEBI" id="CHEBI:15378"/>
        <dbReference type="ChEBI" id="CHEBI:30616"/>
        <dbReference type="ChEBI" id="CHEBI:33019"/>
        <dbReference type="ChEBI" id="CHEBI:33384"/>
        <dbReference type="ChEBI" id="CHEBI:78442"/>
        <dbReference type="ChEBI" id="CHEBI:78533"/>
        <dbReference type="ChEBI" id="CHEBI:456215"/>
        <dbReference type="EC" id="6.1.1.11"/>
    </reaction>
</comment>
<comment type="catalytic activity">
    <reaction evidence="1">
        <text>tRNA(Sec) + L-serine + ATP = L-seryl-tRNA(Sec) + AMP + diphosphate + H(+)</text>
        <dbReference type="Rhea" id="RHEA:42580"/>
        <dbReference type="Rhea" id="RHEA-COMP:9742"/>
        <dbReference type="Rhea" id="RHEA-COMP:10128"/>
        <dbReference type="ChEBI" id="CHEBI:15378"/>
        <dbReference type="ChEBI" id="CHEBI:30616"/>
        <dbReference type="ChEBI" id="CHEBI:33019"/>
        <dbReference type="ChEBI" id="CHEBI:33384"/>
        <dbReference type="ChEBI" id="CHEBI:78442"/>
        <dbReference type="ChEBI" id="CHEBI:78533"/>
        <dbReference type="ChEBI" id="CHEBI:456215"/>
        <dbReference type="EC" id="6.1.1.11"/>
    </reaction>
</comment>
<comment type="pathway">
    <text evidence="1">Aminoacyl-tRNA biosynthesis; selenocysteinyl-tRNA(Sec) biosynthesis; L-seryl-tRNA(Sec) from L-serine and tRNA(Sec): step 1/1.</text>
</comment>
<comment type="subunit">
    <text evidence="1">Homodimer. The tRNA molecule binds across the dimer.</text>
</comment>
<comment type="subcellular location">
    <subcellularLocation>
        <location evidence="1">Cytoplasm</location>
    </subcellularLocation>
</comment>
<comment type="domain">
    <text evidence="1">Consists of two distinct domains, a catalytic core and a N-terminal extension that is involved in tRNA binding.</text>
</comment>
<comment type="similarity">
    <text evidence="1">Belongs to the class-II aminoacyl-tRNA synthetase family. Type-1 seryl-tRNA synthetase subfamily.</text>
</comment>
<evidence type="ECO:0000255" key="1">
    <source>
        <dbReference type="HAMAP-Rule" id="MF_00176"/>
    </source>
</evidence>
<gene>
    <name evidence="1" type="primary">serS</name>
    <name type="ordered locus">PD_1318</name>
</gene>
<reference key="1">
    <citation type="journal article" date="2003" name="J. Bacteriol.">
        <title>Comparative analyses of the complete genome sequences of Pierce's disease and citrus variegated chlorosis strains of Xylella fastidiosa.</title>
        <authorList>
            <person name="Van Sluys M.A."/>
            <person name="de Oliveira M.C."/>
            <person name="Monteiro-Vitorello C.B."/>
            <person name="Miyaki C.Y."/>
            <person name="Furlan L.R."/>
            <person name="Camargo L.E.A."/>
            <person name="da Silva A.C.R."/>
            <person name="Moon D.H."/>
            <person name="Takita M.A."/>
            <person name="Lemos E.G.M."/>
            <person name="Machado M.A."/>
            <person name="Ferro M.I.T."/>
            <person name="da Silva F.R."/>
            <person name="Goldman M.H.S."/>
            <person name="Goldman G.H."/>
            <person name="Lemos M.V.F."/>
            <person name="El-Dorry H."/>
            <person name="Tsai S.M."/>
            <person name="Carrer H."/>
            <person name="Carraro D.M."/>
            <person name="de Oliveira R.C."/>
            <person name="Nunes L.R."/>
            <person name="Siqueira W.J."/>
            <person name="Coutinho L.L."/>
            <person name="Kimura E.T."/>
            <person name="Ferro E.S."/>
            <person name="Harakava R."/>
            <person name="Kuramae E.E."/>
            <person name="Marino C.L."/>
            <person name="Giglioti E."/>
            <person name="Abreu I.L."/>
            <person name="Alves L.M.C."/>
            <person name="do Amaral A.M."/>
            <person name="Baia G.S."/>
            <person name="Blanco S.R."/>
            <person name="Brito M.S."/>
            <person name="Cannavan F.S."/>
            <person name="Celestino A.V."/>
            <person name="da Cunha A.F."/>
            <person name="Fenille R.C."/>
            <person name="Ferro J.A."/>
            <person name="Formighieri E.F."/>
            <person name="Kishi L.T."/>
            <person name="Leoni S.G."/>
            <person name="Oliveira A.R."/>
            <person name="Rosa V.E. Jr."/>
            <person name="Sassaki F.T."/>
            <person name="Sena J.A.D."/>
            <person name="de Souza A.A."/>
            <person name="Truffi D."/>
            <person name="Tsukumo F."/>
            <person name="Yanai G.M."/>
            <person name="Zaros L.G."/>
            <person name="Civerolo E.L."/>
            <person name="Simpson A.J.G."/>
            <person name="Almeida N.F. Jr."/>
            <person name="Setubal J.C."/>
            <person name="Kitajima J.P."/>
        </authorList>
    </citation>
    <scope>NUCLEOTIDE SEQUENCE [LARGE SCALE GENOMIC DNA]</scope>
    <source>
        <strain>Temecula1 / ATCC 700964</strain>
    </source>
</reference>
<name>SYS_XYLFT</name>
<feature type="chain" id="PRO_0000122165" description="Serine--tRNA ligase">
    <location>
        <begin position="1"/>
        <end position="426"/>
    </location>
</feature>
<feature type="binding site" evidence="1">
    <location>
        <begin position="233"/>
        <end position="235"/>
    </location>
    <ligand>
        <name>L-serine</name>
        <dbReference type="ChEBI" id="CHEBI:33384"/>
    </ligand>
</feature>
<feature type="binding site" evidence="1">
    <location>
        <begin position="264"/>
        <end position="266"/>
    </location>
    <ligand>
        <name>ATP</name>
        <dbReference type="ChEBI" id="CHEBI:30616"/>
    </ligand>
</feature>
<feature type="binding site" evidence="1">
    <location>
        <position position="287"/>
    </location>
    <ligand>
        <name>L-serine</name>
        <dbReference type="ChEBI" id="CHEBI:33384"/>
    </ligand>
</feature>
<feature type="binding site" evidence="1">
    <location>
        <begin position="351"/>
        <end position="354"/>
    </location>
    <ligand>
        <name>ATP</name>
        <dbReference type="ChEBI" id="CHEBI:30616"/>
    </ligand>
</feature>
<feature type="binding site" evidence="1">
    <location>
        <position position="387"/>
    </location>
    <ligand>
        <name>L-serine</name>
        <dbReference type="ChEBI" id="CHEBI:33384"/>
    </ligand>
</feature>
<organism>
    <name type="scientific">Xylella fastidiosa (strain Temecula1 / ATCC 700964)</name>
    <dbReference type="NCBI Taxonomy" id="183190"/>
    <lineage>
        <taxon>Bacteria</taxon>
        <taxon>Pseudomonadati</taxon>
        <taxon>Pseudomonadota</taxon>
        <taxon>Gammaproteobacteria</taxon>
        <taxon>Lysobacterales</taxon>
        <taxon>Lysobacteraceae</taxon>
        <taxon>Xylella</taxon>
    </lineage>
</organism>
<sequence>MLDPTLLRQQLAKLAECLLTVRGFTLDVAALEALESERKRIQVHTQELQSLRNSKSKAIGQARSKGEDVSALMAEVAAFSDDLKASEIALEEIRTELEKVALDIPNLPQQDVPLGADERDNVEQARWGVPRTFDFAIKDHVELGACHGWLDAESAAKLSGARFTVLRGPIARLHRALAQCMLDLHVSQHGYEEVNVPIIVNADSLHGTGQLPKFEEDMFSTQLGEHRRYLISTSEISLTNLVRNEIIEADRLPLRMVAHSLCFRSEAGSGGRDTRGMIRQHQFEKVELVSVCKPQDSEGEHHRMTRCAETVLEMLGLPYRKILLCTGDMGFAATKTYDLEVWLPSQGMYREISSCSNCGDFQARRMQARWRNSVTGKPELVHTLNGSGVAVGRAMIAVMENYQNADGSITVPEVLRPYMDGLSRIG</sequence>
<keyword id="KW-0030">Aminoacyl-tRNA synthetase</keyword>
<keyword id="KW-0067">ATP-binding</keyword>
<keyword id="KW-0963">Cytoplasm</keyword>
<keyword id="KW-0436">Ligase</keyword>
<keyword id="KW-0547">Nucleotide-binding</keyword>
<keyword id="KW-0648">Protein biosynthesis</keyword>
<keyword id="KW-1185">Reference proteome</keyword>
<accession>Q87BX8</accession>
<protein>
    <recommendedName>
        <fullName evidence="1">Serine--tRNA ligase</fullName>
        <ecNumber evidence="1">6.1.1.11</ecNumber>
    </recommendedName>
    <alternativeName>
        <fullName evidence="1">Seryl-tRNA synthetase</fullName>
        <shortName evidence="1">SerRS</shortName>
    </alternativeName>
    <alternativeName>
        <fullName evidence="1">Seryl-tRNA(Ser/Sec) synthetase</fullName>
    </alternativeName>
</protein>
<proteinExistence type="inferred from homology"/>